<evidence type="ECO:0000255" key="1">
    <source>
        <dbReference type="HAMAP-Rule" id="MF_00636"/>
    </source>
</evidence>
<evidence type="ECO:0000256" key="2">
    <source>
        <dbReference type="SAM" id="MobiDB-lite"/>
    </source>
</evidence>
<accession>A1R6G6</accession>
<feature type="chain" id="PRO_0000383212" description="Nucleotide-binding protein AAur_2084">
    <location>
        <begin position="1"/>
        <end position="307"/>
    </location>
</feature>
<feature type="region of interest" description="Disordered" evidence="2">
    <location>
        <begin position="1"/>
        <end position="21"/>
    </location>
</feature>
<feature type="binding site" evidence="1">
    <location>
        <begin position="30"/>
        <end position="37"/>
    </location>
    <ligand>
        <name>ATP</name>
        <dbReference type="ChEBI" id="CHEBI:30616"/>
    </ligand>
</feature>
<feature type="binding site" evidence="1">
    <location>
        <begin position="81"/>
        <end position="84"/>
    </location>
    <ligand>
        <name>GTP</name>
        <dbReference type="ChEBI" id="CHEBI:37565"/>
    </ligand>
</feature>
<sequence>MDEATAKSGTEQDGLTPVKPPEAELLVVTGMSGAGRSTASDALEDHGWYVVDNLPPQMLGTLAEIVSHAPKSIPKLAVVVDVRSKDLFTDIQTALGALSASGITFRVLFLDANDDVLVRRFEQGRRPHPLQGGGRILDGIGIEREVLRELREHADVVLDTSEFNVHGLATAITELFSDTGPVTLRLNVMSFGFKYGLPVDANFVADARFIPNPHWVPQLRPHTGLDEDVSDYVLGAEGVQEFVDRYVRALEPVLDGYRQENKHYATLAVGCTGGKHRSVAVAMELSKRLAQYPRVTVTTTHRDLGRE</sequence>
<comment type="function">
    <text evidence="1">Displays ATPase and GTPase activities.</text>
</comment>
<comment type="similarity">
    <text evidence="1">Belongs to the RapZ-like family.</text>
</comment>
<name>Y2084_PAEAT</name>
<proteinExistence type="inferred from homology"/>
<keyword id="KW-0067">ATP-binding</keyword>
<keyword id="KW-0342">GTP-binding</keyword>
<keyword id="KW-0547">Nucleotide-binding</keyword>
<gene>
    <name type="ordered locus">AAur_2084</name>
</gene>
<reference key="1">
    <citation type="journal article" date="2006" name="PLoS Genet.">
        <title>Secrets of soil survival revealed by the genome sequence of Arthrobacter aurescens TC1.</title>
        <authorList>
            <person name="Mongodin E.F."/>
            <person name="Shapir N."/>
            <person name="Daugherty S.C."/>
            <person name="DeBoy R.T."/>
            <person name="Emerson J.B."/>
            <person name="Shvartzbeyn A."/>
            <person name="Radune D."/>
            <person name="Vamathevan J."/>
            <person name="Riggs F."/>
            <person name="Grinberg V."/>
            <person name="Khouri H.M."/>
            <person name="Wackett L.P."/>
            <person name="Nelson K.E."/>
            <person name="Sadowsky M.J."/>
        </authorList>
    </citation>
    <scope>NUCLEOTIDE SEQUENCE [LARGE SCALE GENOMIC DNA]</scope>
    <source>
        <strain>TC1</strain>
    </source>
</reference>
<dbReference type="EMBL" id="CP000474">
    <property type="protein sequence ID" value="ABM07955.1"/>
    <property type="molecule type" value="Genomic_DNA"/>
</dbReference>
<dbReference type="SMR" id="A1R6G6"/>
<dbReference type="STRING" id="290340.AAur_2084"/>
<dbReference type="KEGG" id="aau:AAur_2084"/>
<dbReference type="eggNOG" id="COG1660">
    <property type="taxonomic scope" value="Bacteria"/>
</dbReference>
<dbReference type="HOGENOM" id="CLU_059558_0_0_11"/>
<dbReference type="OrthoDB" id="9784461at2"/>
<dbReference type="Proteomes" id="UP000000637">
    <property type="component" value="Chromosome"/>
</dbReference>
<dbReference type="GO" id="GO:0005524">
    <property type="term" value="F:ATP binding"/>
    <property type="evidence" value="ECO:0007669"/>
    <property type="project" value="UniProtKB-UniRule"/>
</dbReference>
<dbReference type="GO" id="GO:0005525">
    <property type="term" value="F:GTP binding"/>
    <property type="evidence" value="ECO:0007669"/>
    <property type="project" value="UniProtKB-UniRule"/>
</dbReference>
<dbReference type="Gene3D" id="3.40.50.300">
    <property type="entry name" value="P-loop containing nucleotide triphosphate hydrolases"/>
    <property type="match status" value="1"/>
</dbReference>
<dbReference type="HAMAP" id="MF_00636">
    <property type="entry name" value="RapZ_like"/>
    <property type="match status" value="1"/>
</dbReference>
<dbReference type="InterPro" id="IPR027417">
    <property type="entry name" value="P-loop_NTPase"/>
</dbReference>
<dbReference type="InterPro" id="IPR005337">
    <property type="entry name" value="RapZ-like"/>
</dbReference>
<dbReference type="InterPro" id="IPR053930">
    <property type="entry name" value="RapZ-like_N"/>
</dbReference>
<dbReference type="InterPro" id="IPR053931">
    <property type="entry name" value="RapZ_C"/>
</dbReference>
<dbReference type="NCBIfam" id="NF003828">
    <property type="entry name" value="PRK05416.1"/>
    <property type="match status" value="1"/>
</dbReference>
<dbReference type="PANTHER" id="PTHR30448">
    <property type="entry name" value="RNASE ADAPTER PROTEIN RAPZ"/>
    <property type="match status" value="1"/>
</dbReference>
<dbReference type="PANTHER" id="PTHR30448:SF0">
    <property type="entry name" value="RNASE ADAPTER PROTEIN RAPZ"/>
    <property type="match status" value="1"/>
</dbReference>
<dbReference type="Pfam" id="PF22740">
    <property type="entry name" value="PapZ_C"/>
    <property type="match status" value="1"/>
</dbReference>
<dbReference type="Pfam" id="PF03668">
    <property type="entry name" value="RapZ-like_N"/>
    <property type="match status" value="1"/>
</dbReference>
<dbReference type="PIRSF" id="PIRSF005052">
    <property type="entry name" value="P-loopkin"/>
    <property type="match status" value="1"/>
</dbReference>
<dbReference type="SUPFAM" id="SSF52540">
    <property type="entry name" value="P-loop containing nucleoside triphosphate hydrolases"/>
    <property type="match status" value="1"/>
</dbReference>
<organism>
    <name type="scientific">Paenarthrobacter aurescens (strain TC1)</name>
    <dbReference type="NCBI Taxonomy" id="290340"/>
    <lineage>
        <taxon>Bacteria</taxon>
        <taxon>Bacillati</taxon>
        <taxon>Actinomycetota</taxon>
        <taxon>Actinomycetes</taxon>
        <taxon>Micrococcales</taxon>
        <taxon>Micrococcaceae</taxon>
        <taxon>Paenarthrobacter</taxon>
    </lineage>
</organism>
<protein>
    <recommendedName>
        <fullName evidence="1">Nucleotide-binding protein AAur_2084</fullName>
    </recommendedName>
</protein>